<feature type="chain" id="PRO_0000192768" description="Bifunctional uridylyltransferase/uridylyl-removing enzyme">
    <location>
        <begin position="1"/>
        <end position="890"/>
    </location>
</feature>
<feature type="domain" description="HD" evidence="2">
    <location>
        <begin position="468"/>
        <end position="590"/>
    </location>
</feature>
<feature type="domain" description="ACT 1" evidence="1">
    <location>
        <begin position="709"/>
        <end position="789"/>
    </location>
</feature>
<feature type="domain" description="ACT 2" evidence="1">
    <location>
        <begin position="816"/>
        <end position="890"/>
    </location>
</feature>
<feature type="region of interest" description="Uridylyltransferase">
    <location>
        <begin position="1"/>
        <end position="349"/>
    </location>
</feature>
<feature type="region of interest" description="Uridylyl-removing">
    <location>
        <begin position="350"/>
        <end position="708"/>
    </location>
</feature>
<proteinExistence type="inferred from homology"/>
<protein>
    <recommendedName>
        <fullName evidence="1">Bifunctional uridylyltransferase/uridylyl-removing enzyme</fullName>
        <shortName evidence="1">UTase/UR</shortName>
    </recommendedName>
    <alternativeName>
        <fullName evidence="1">Bifunctional [protein-PII] modification enzyme</fullName>
    </alternativeName>
    <alternativeName>
        <fullName evidence="1">Bifunctional nitrogen sensor protein</fullName>
    </alternativeName>
    <domain>
        <recommendedName>
            <fullName evidence="1">[Protein-PII] uridylyltransferase</fullName>
            <shortName evidence="1">PII uridylyltransferase</shortName>
            <shortName evidence="1">UTase</shortName>
            <ecNumber evidence="1">2.7.7.59</ecNumber>
        </recommendedName>
    </domain>
    <domain>
        <recommendedName>
            <fullName evidence="1">[Protein-PII]-UMP uridylyl-removing enzyme</fullName>
            <shortName evidence="1">UR</shortName>
            <ecNumber evidence="1">3.1.4.-</ecNumber>
        </recommendedName>
    </domain>
</protein>
<dbReference type="EC" id="2.7.7.59" evidence="1"/>
<dbReference type="EC" id="3.1.4.-" evidence="1"/>
<dbReference type="EMBL" id="AE005674">
    <property type="protein sequence ID" value="AAN41819.1"/>
    <property type="molecule type" value="Genomic_DNA"/>
</dbReference>
<dbReference type="EMBL" id="AE014073">
    <property type="protein sequence ID" value="AAP15700.1"/>
    <property type="molecule type" value="Genomic_DNA"/>
</dbReference>
<dbReference type="RefSeq" id="NP_706112.1">
    <property type="nucleotide sequence ID" value="NC_004337.2"/>
</dbReference>
<dbReference type="RefSeq" id="WP_001094600.1">
    <property type="nucleotide sequence ID" value="NZ_WPGW01000006.1"/>
</dbReference>
<dbReference type="SMR" id="Q83MD4"/>
<dbReference type="STRING" id="198214.SF0157"/>
<dbReference type="PaxDb" id="198214-SF0157"/>
<dbReference type="GeneID" id="1024456"/>
<dbReference type="KEGG" id="sfl:SF0157"/>
<dbReference type="KEGG" id="sfx:S0160"/>
<dbReference type="PATRIC" id="fig|198214.7.peg.177"/>
<dbReference type="HOGENOM" id="CLU_012833_0_0_6"/>
<dbReference type="Proteomes" id="UP000001006">
    <property type="component" value="Chromosome"/>
</dbReference>
<dbReference type="Proteomes" id="UP000002673">
    <property type="component" value="Chromosome"/>
</dbReference>
<dbReference type="GO" id="GO:0008773">
    <property type="term" value="F:[protein-PII] uridylyltransferase activity"/>
    <property type="evidence" value="ECO:0007669"/>
    <property type="project" value="UniProtKB-UniRule"/>
</dbReference>
<dbReference type="GO" id="GO:0008081">
    <property type="term" value="F:phosphoric diester hydrolase activity"/>
    <property type="evidence" value="ECO:0007669"/>
    <property type="project" value="UniProtKB-UniRule"/>
</dbReference>
<dbReference type="GO" id="GO:0006808">
    <property type="term" value="P:regulation of nitrogen utilization"/>
    <property type="evidence" value="ECO:0007669"/>
    <property type="project" value="UniProtKB-UniRule"/>
</dbReference>
<dbReference type="CDD" id="cd04899">
    <property type="entry name" value="ACT_ACR-UUR-like_2"/>
    <property type="match status" value="1"/>
</dbReference>
<dbReference type="CDD" id="cd04900">
    <property type="entry name" value="ACT_UUR-like_1"/>
    <property type="match status" value="1"/>
</dbReference>
<dbReference type="CDD" id="cd00077">
    <property type="entry name" value="HDc"/>
    <property type="match status" value="1"/>
</dbReference>
<dbReference type="CDD" id="cd05401">
    <property type="entry name" value="NT_GlnE_GlnD_like"/>
    <property type="match status" value="1"/>
</dbReference>
<dbReference type="FunFam" id="1.10.3210.10:FF:000005">
    <property type="entry name" value="Bifunctional uridylyltransferase/uridylyl-removing enzyme"/>
    <property type="match status" value="1"/>
</dbReference>
<dbReference type="Gene3D" id="1.10.3210.10">
    <property type="entry name" value="Hypothetical protein af1432"/>
    <property type="match status" value="1"/>
</dbReference>
<dbReference type="HAMAP" id="MF_00277">
    <property type="entry name" value="PII_uridylyl_transf"/>
    <property type="match status" value="1"/>
</dbReference>
<dbReference type="InterPro" id="IPR045865">
    <property type="entry name" value="ACT-like_dom_sf"/>
</dbReference>
<dbReference type="InterPro" id="IPR002912">
    <property type="entry name" value="ACT_dom"/>
</dbReference>
<dbReference type="InterPro" id="IPR003607">
    <property type="entry name" value="HD/PDEase_dom"/>
</dbReference>
<dbReference type="InterPro" id="IPR006674">
    <property type="entry name" value="HD_domain"/>
</dbReference>
<dbReference type="InterPro" id="IPR043519">
    <property type="entry name" value="NT_sf"/>
</dbReference>
<dbReference type="InterPro" id="IPR013546">
    <property type="entry name" value="PII_UdlTrfase/GS_AdlTrfase"/>
</dbReference>
<dbReference type="InterPro" id="IPR002934">
    <property type="entry name" value="Polymerase_NTP_transf_dom"/>
</dbReference>
<dbReference type="InterPro" id="IPR010043">
    <property type="entry name" value="UTase/UR"/>
</dbReference>
<dbReference type="NCBIfam" id="NF002487">
    <property type="entry name" value="PRK01759.1"/>
    <property type="match status" value="1"/>
</dbReference>
<dbReference type="NCBIfam" id="NF003448">
    <property type="entry name" value="PRK05007.1"/>
    <property type="match status" value="1"/>
</dbReference>
<dbReference type="NCBIfam" id="TIGR01693">
    <property type="entry name" value="UTase_glnD"/>
    <property type="match status" value="1"/>
</dbReference>
<dbReference type="PANTHER" id="PTHR47320">
    <property type="entry name" value="BIFUNCTIONAL URIDYLYLTRANSFERASE/URIDYLYL-REMOVING ENZYME"/>
    <property type="match status" value="1"/>
</dbReference>
<dbReference type="PANTHER" id="PTHR47320:SF1">
    <property type="entry name" value="BIFUNCTIONAL URIDYLYLTRANSFERASE_URIDYLYL-REMOVING ENZYME"/>
    <property type="match status" value="1"/>
</dbReference>
<dbReference type="Pfam" id="PF01842">
    <property type="entry name" value="ACT"/>
    <property type="match status" value="2"/>
</dbReference>
<dbReference type="Pfam" id="PF08335">
    <property type="entry name" value="GlnD_UR_UTase"/>
    <property type="match status" value="1"/>
</dbReference>
<dbReference type="Pfam" id="PF01966">
    <property type="entry name" value="HD"/>
    <property type="match status" value="1"/>
</dbReference>
<dbReference type="Pfam" id="PF01909">
    <property type="entry name" value="NTP_transf_2"/>
    <property type="match status" value="1"/>
</dbReference>
<dbReference type="PIRSF" id="PIRSF006288">
    <property type="entry name" value="PII_uridyltransf"/>
    <property type="match status" value="1"/>
</dbReference>
<dbReference type="SMART" id="SM00471">
    <property type="entry name" value="HDc"/>
    <property type="match status" value="1"/>
</dbReference>
<dbReference type="SUPFAM" id="SSF55021">
    <property type="entry name" value="ACT-like"/>
    <property type="match status" value="2"/>
</dbReference>
<dbReference type="SUPFAM" id="SSF109604">
    <property type="entry name" value="HD-domain/PDEase-like"/>
    <property type="match status" value="1"/>
</dbReference>
<dbReference type="SUPFAM" id="SSF81301">
    <property type="entry name" value="Nucleotidyltransferase"/>
    <property type="match status" value="1"/>
</dbReference>
<dbReference type="SUPFAM" id="SSF81593">
    <property type="entry name" value="Nucleotidyltransferase substrate binding subunit/domain"/>
    <property type="match status" value="1"/>
</dbReference>
<dbReference type="PROSITE" id="PS51671">
    <property type="entry name" value="ACT"/>
    <property type="match status" value="2"/>
</dbReference>
<dbReference type="PROSITE" id="PS51831">
    <property type="entry name" value="HD"/>
    <property type="match status" value="1"/>
</dbReference>
<sequence length="890" mass="102403">MNTLPEQYANTALSTLPGQPQNPCAWPRDELTVCGIKAHIDTFQRWLGDAFDNGISAEQLIEARTEFIDQLLQRLWIEAGFSQIADLALVAVGGYGRGELHPLSDIDLLILSRKKLPDDQAQKVGELLTLLWDVKLEVGHSVRTLEECMLEGLSDLTVATNLIESRLLIGDVALFLELQKHIFSEGFWPSDKFYAAKVEEQNQRHQRYHGTSYNLEPDIKSSPGGLRDIHTLQWVARRHFGATSLDEMVGFGFLTSAERAELNECLHILWRIRFALHLVVSRYDNRLLFDRQLSVAQRLNYSGEGNEPVERMMKDYFRVTRRVSELNQMLLQLFDEAILALPADEKPRPLDDEFQLRGTLIDLRDETLFMRQPEAILRMFYTMVRNSAITGIYSTTLRQLRHARRHLQQPLCNIPQARKLFLSILRHPGAVRRGLLPMHRHSVLGAYMPQWSHIVGQMQFDLFHAYTVDEHTIRVMLKLESFASEETRQRHPLCVDVWPRLPSTELIFIAALFHDIAKGRGGDHSILGAQDVVHFAELHGLNSRETQLVAWLVRQHLLMSVTAQRRDIQDPEVIKQFAEEVQTENRLRYLVCLTVADICATNETLWNSWKQSLLRELYFATEKQLRRGMQNTPDMRERVRHHQLQALALLRMDNIDEEALHQIWSRCRANYFVRHSPNQLAWHARHLLQHDLSKPLVLLSPQATRGGTEIFIWSPDRPYLFAAVCAELDRRNLSVHDAQIFTTRDGMAMDTFIVLEPDGSPLSADRHEVIRFGLEQVLTQSSWQPPQPRRQPAKLRHFTVETEVTFLPTHTDRKSFLELIALDQPGLLARVGKIFADLGISLHGARITTIGERVEDLFIIATADRRALNNELQQEVHQRLTEALNPNDKG</sequence>
<accession>Q83MD4</accession>
<keyword id="KW-0378">Hydrolase</keyword>
<keyword id="KW-0460">Magnesium</keyword>
<keyword id="KW-0511">Multifunctional enzyme</keyword>
<keyword id="KW-0548">Nucleotidyltransferase</keyword>
<keyword id="KW-1185">Reference proteome</keyword>
<keyword id="KW-0677">Repeat</keyword>
<keyword id="KW-0808">Transferase</keyword>
<comment type="function">
    <text evidence="1">Modifies, by uridylylation and deuridylylation, the PII regulatory proteins (GlnB and homologs), in response to the nitrogen status of the cell that GlnD senses through the glutamine level. Under low glutamine levels, catalyzes the conversion of the PII proteins and UTP to PII-UMP and PPi, while under higher glutamine levels, GlnD hydrolyzes PII-UMP to PII and UMP (deuridylylation). Thus, controls uridylylation state and activity of the PII proteins, and plays an important role in the regulation of nitrogen assimilation and metabolism.</text>
</comment>
<comment type="catalytic activity">
    <reaction evidence="1">
        <text>[protein-PII]-L-tyrosine + UTP = [protein-PII]-uridylyl-L-tyrosine + diphosphate</text>
        <dbReference type="Rhea" id="RHEA:13673"/>
        <dbReference type="Rhea" id="RHEA-COMP:12147"/>
        <dbReference type="Rhea" id="RHEA-COMP:12148"/>
        <dbReference type="ChEBI" id="CHEBI:33019"/>
        <dbReference type="ChEBI" id="CHEBI:46398"/>
        <dbReference type="ChEBI" id="CHEBI:46858"/>
        <dbReference type="ChEBI" id="CHEBI:90602"/>
        <dbReference type="EC" id="2.7.7.59"/>
    </reaction>
</comment>
<comment type="catalytic activity">
    <reaction evidence="1">
        <text>[protein-PII]-uridylyl-L-tyrosine + H2O = [protein-PII]-L-tyrosine + UMP + H(+)</text>
        <dbReference type="Rhea" id="RHEA:48600"/>
        <dbReference type="Rhea" id="RHEA-COMP:12147"/>
        <dbReference type="Rhea" id="RHEA-COMP:12148"/>
        <dbReference type="ChEBI" id="CHEBI:15377"/>
        <dbReference type="ChEBI" id="CHEBI:15378"/>
        <dbReference type="ChEBI" id="CHEBI:46858"/>
        <dbReference type="ChEBI" id="CHEBI:57865"/>
        <dbReference type="ChEBI" id="CHEBI:90602"/>
    </reaction>
</comment>
<comment type="cofactor">
    <cofactor evidence="1">
        <name>Mg(2+)</name>
        <dbReference type="ChEBI" id="CHEBI:18420"/>
    </cofactor>
</comment>
<comment type="activity regulation">
    <text evidence="1">Uridylyltransferase (UTase) activity is inhibited by glutamine, while glutamine activates uridylyl-removing (UR) activity.</text>
</comment>
<comment type="domain">
    <text evidence="1">Has four distinct domains: an N-terminal nucleotidyltransferase (NT) domain responsible for UTase activity, a central HD domain that encodes UR activity, and two C-terminal ACT domains that seem to have a role in glutamine sensing.</text>
</comment>
<comment type="similarity">
    <text evidence="1">Belongs to the GlnD family.</text>
</comment>
<reference key="1">
    <citation type="journal article" date="2002" name="Nucleic Acids Res.">
        <title>Genome sequence of Shigella flexneri 2a: insights into pathogenicity through comparison with genomes of Escherichia coli K12 and O157.</title>
        <authorList>
            <person name="Jin Q."/>
            <person name="Yuan Z."/>
            <person name="Xu J."/>
            <person name="Wang Y."/>
            <person name="Shen Y."/>
            <person name="Lu W."/>
            <person name="Wang J."/>
            <person name="Liu H."/>
            <person name="Yang J."/>
            <person name="Yang F."/>
            <person name="Zhang X."/>
            <person name="Zhang J."/>
            <person name="Yang G."/>
            <person name="Wu H."/>
            <person name="Qu D."/>
            <person name="Dong J."/>
            <person name="Sun L."/>
            <person name="Xue Y."/>
            <person name="Zhao A."/>
            <person name="Gao Y."/>
            <person name="Zhu J."/>
            <person name="Kan B."/>
            <person name="Ding K."/>
            <person name="Chen S."/>
            <person name="Cheng H."/>
            <person name="Yao Z."/>
            <person name="He B."/>
            <person name="Chen R."/>
            <person name="Ma D."/>
            <person name="Qiang B."/>
            <person name="Wen Y."/>
            <person name="Hou Y."/>
            <person name="Yu J."/>
        </authorList>
    </citation>
    <scope>NUCLEOTIDE SEQUENCE [LARGE SCALE GENOMIC DNA]</scope>
    <source>
        <strain>301 / Serotype 2a</strain>
    </source>
</reference>
<reference key="2">
    <citation type="journal article" date="2003" name="Infect. Immun.">
        <title>Complete genome sequence and comparative genomics of Shigella flexneri serotype 2a strain 2457T.</title>
        <authorList>
            <person name="Wei J."/>
            <person name="Goldberg M.B."/>
            <person name="Burland V."/>
            <person name="Venkatesan M.M."/>
            <person name="Deng W."/>
            <person name="Fournier G."/>
            <person name="Mayhew G.F."/>
            <person name="Plunkett G. III"/>
            <person name="Rose D.J."/>
            <person name="Darling A."/>
            <person name="Mau B."/>
            <person name="Perna N.T."/>
            <person name="Payne S.M."/>
            <person name="Runyen-Janecky L.J."/>
            <person name="Zhou S."/>
            <person name="Schwartz D.C."/>
            <person name="Blattner F.R."/>
        </authorList>
    </citation>
    <scope>NUCLEOTIDE SEQUENCE [LARGE SCALE GENOMIC DNA]</scope>
    <source>
        <strain>ATCC 700930 / 2457T / Serotype 2a</strain>
    </source>
</reference>
<gene>
    <name evidence="1" type="primary">glnD</name>
    <name type="ordered locus">SF0157</name>
    <name type="ordered locus">S0160</name>
</gene>
<name>GLND_SHIFL</name>
<evidence type="ECO:0000255" key="1">
    <source>
        <dbReference type="HAMAP-Rule" id="MF_00277"/>
    </source>
</evidence>
<evidence type="ECO:0000255" key="2">
    <source>
        <dbReference type="PROSITE-ProRule" id="PRU01175"/>
    </source>
</evidence>
<organism>
    <name type="scientific">Shigella flexneri</name>
    <dbReference type="NCBI Taxonomy" id="623"/>
    <lineage>
        <taxon>Bacteria</taxon>
        <taxon>Pseudomonadati</taxon>
        <taxon>Pseudomonadota</taxon>
        <taxon>Gammaproteobacteria</taxon>
        <taxon>Enterobacterales</taxon>
        <taxon>Enterobacteriaceae</taxon>
        <taxon>Shigella</taxon>
    </lineage>
</organism>